<protein>
    <recommendedName>
        <fullName>Pyocin-S2</fullName>
        <ecNumber>3.1.-.-</ecNumber>
    </recommendedName>
    <alternativeName>
        <fullName>Killer protein</fullName>
    </alternativeName>
</protein>
<accession>Q06584</accession>
<evidence type="ECO:0000250" key="1"/>
<evidence type="ECO:0000269" key="2">
    <source>
    </source>
</evidence>
<evidence type="ECO:0000305" key="3"/>
<evidence type="ECO:0007829" key="4">
    <source>
        <dbReference type="PDB" id="4QKO"/>
    </source>
</evidence>
<evidence type="ECO:0007829" key="5">
    <source>
        <dbReference type="PDB" id="5ODW"/>
    </source>
</evidence>
<name>PYS2_PSEAE</name>
<feature type="initiator methionine" description="Removed" evidence="2">
    <location>
        <position position="1"/>
    </location>
</feature>
<feature type="chain" id="PRO_0000218686" description="Pyocin-S2">
    <location>
        <begin position="2"/>
        <end position="689"/>
    </location>
</feature>
<feature type="binding site" evidence="1">
    <location>
        <position position="656"/>
    </location>
    <ligand>
        <name>Zn(2+)</name>
        <dbReference type="ChEBI" id="CHEBI:29105"/>
    </ligand>
</feature>
<feature type="binding site" evidence="1">
    <location>
        <position position="681"/>
    </location>
    <ligand>
        <name>Zn(2+)</name>
        <dbReference type="ChEBI" id="CHEBI:29105"/>
    </ligand>
</feature>
<feature type="binding site" evidence="1">
    <location>
        <position position="685"/>
    </location>
    <ligand>
        <name>Zn(2+)</name>
        <dbReference type="ChEBI" id="CHEBI:29105"/>
    </ligand>
</feature>
<feature type="sequence conflict" description="In Ref. 1; AA sequence." evidence="3" ref="1">
    <original>R</original>
    <variation>RR</variation>
    <location>
        <position position="605"/>
    </location>
</feature>
<feature type="strand" evidence="5">
    <location>
        <begin position="12"/>
        <end position="14"/>
    </location>
</feature>
<feature type="strand" evidence="5">
    <location>
        <begin position="23"/>
        <end position="26"/>
    </location>
</feature>
<feature type="helix" evidence="5">
    <location>
        <begin position="47"/>
        <end position="70"/>
    </location>
</feature>
<feature type="helix" evidence="5">
    <location>
        <begin position="72"/>
        <end position="86"/>
    </location>
</feature>
<feature type="helix" evidence="5">
    <location>
        <begin position="96"/>
        <end position="121"/>
    </location>
</feature>
<feature type="turn" evidence="5">
    <location>
        <begin position="127"/>
        <end position="129"/>
    </location>
</feature>
<feature type="helix" evidence="5">
    <location>
        <begin position="133"/>
        <end position="148"/>
    </location>
</feature>
<feature type="helix" evidence="5">
    <location>
        <begin position="153"/>
        <end position="204"/>
    </location>
</feature>
<feature type="helix" evidence="4">
    <location>
        <begin position="576"/>
        <end position="581"/>
    </location>
</feature>
<feature type="helix" evidence="4">
    <location>
        <begin position="590"/>
        <end position="596"/>
    </location>
</feature>
<feature type="strand" evidence="4">
    <location>
        <begin position="600"/>
        <end position="603"/>
    </location>
</feature>
<feature type="helix" evidence="4">
    <location>
        <begin position="604"/>
        <end position="617"/>
    </location>
</feature>
<feature type="helix" evidence="4">
    <location>
        <begin position="621"/>
        <end position="624"/>
    </location>
</feature>
<feature type="helix" evidence="4">
    <location>
        <begin position="627"/>
        <end position="633"/>
    </location>
</feature>
<feature type="turn" evidence="4">
    <location>
        <begin position="634"/>
        <end position="636"/>
    </location>
</feature>
<feature type="helix" evidence="4">
    <location>
        <begin position="643"/>
        <end position="645"/>
    </location>
</feature>
<feature type="strand" evidence="4">
    <location>
        <begin position="654"/>
        <end position="659"/>
    </location>
</feature>
<feature type="helix" evidence="4">
    <location>
        <begin position="661"/>
        <end position="663"/>
    </location>
</feature>
<feature type="strand" evidence="4">
    <location>
        <begin position="667"/>
        <end position="669"/>
    </location>
</feature>
<feature type="helix" evidence="4">
    <location>
        <begin position="670"/>
        <end position="672"/>
    </location>
</feature>
<feature type="strand" evidence="4">
    <location>
        <begin position="673"/>
        <end position="676"/>
    </location>
</feature>
<feature type="helix" evidence="4">
    <location>
        <begin position="678"/>
        <end position="685"/>
    </location>
</feature>
<proteinExistence type="evidence at protein level"/>
<sequence length="689" mass="73854">MAVNDYEPGSMVITHVQGGGRDIIQYIPARSSYGTPPFVPPGPSPYVGTGMQEYRKLRSTLDKSHSELKKNLKNETLKEVDELKSEAGLPGKAVSANDIRDEKSIVDALMDAKAKSLKAIEDRPANLYTASDFPQKSESMYQSQLLASRKFYGEFLDRHMSELAKAYSADIYKAQIAILKQTSQELENKARSLEAEAQRAAAEVEADYKARKANVEKKVQSELDQAGNALPQLTNPTPEQWLERATQLVTQAIANKKKLQTANNALIAKAPNALEKQKATYNADLLVDEIASLQARLDKLNAETARRKEIARQAAIRAANTYAMPANGSVVATAAGRGLIQVAQGAASLAQAISDAIAVLGRVLASAPSVMAVGFASLTYSSRTAEQWQDQTPDSVRYALGMDAAKLGLPPSVNLNAVAKASGTVDLPMRLTNEARGNTTTLSVVSTDGVSVPKAVPVRMAAYNATTGLYEVTVPSTTAEAPPLILTWTPASPPGNQNPSSTTPVVPKPVPVYEGATLTPVKATPETYPGVITLPEDLIIGFPADSGIKPIYVMFRDPRDVPGAATGKGQPVSGNWLGAASQGEGAPIPSQIADKLRGKTFKNWRDFREQFWIAVANDPELSKQFNPGSLAVMRDGGAPYVRESEQAGGRIKIEIHHKVRIADGGGVYNMGNLVAVTPKRHIEIHKGGK</sequence>
<dbReference type="EC" id="3.1.-.-"/>
<dbReference type="EMBL" id="D12708">
    <property type="protein sequence ID" value="BAA02203.1"/>
    <property type="molecule type" value="Genomic_DNA"/>
</dbReference>
<dbReference type="EMBL" id="AE004091">
    <property type="protein sequence ID" value="AAG04539.1"/>
    <property type="molecule type" value="Genomic_DNA"/>
</dbReference>
<dbReference type="PIR" id="C36907">
    <property type="entry name" value="C36907"/>
</dbReference>
<dbReference type="PIR" id="D83501">
    <property type="entry name" value="D83501"/>
</dbReference>
<dbReference type="RefSeq" id="NP_249841.1">
    <property type="nucleotide sequence ID" value="NC_002516.2"/>
</dbReference>
<dbReference type="RefSeq" id="WP_003112476.1">
    <property type="nucleotide sequence ID" value="NC_002516.2"/>
</dbReference>
<dbReference type="PDB" id="4QKO">
    <property type="method" value="X-ray"/>
    <property type="resolution" value="1.80 A"/>
    <property type="chains" value="B/D/F/H=556-689"/>
</dbReference>
<dbReference type="PDB" id="5ODW">
    <property type="method" value="X-ray"/>
    <property type="resolution" value="2.80 A"/>
    <property type="chains" value="C/D=1-209"/>
</dbReference>
<dbReference type="PDBsum" id="4QKO"/>
<dbReference type="PDBsum" id="5ODW"/>
<dbReference type="SMR" id="Q06584"/>
<dbReference type="STRING" id="208964.PA1150"/>
<dbReference type="TCDB" id="1.C.1.4.2">
    <property type="family name" value="the channel-forming colicin (colicin) family"/>
</dbReference>
<dbReference type="PaxDb" id="208964-PA1150"/>
<dbReference type="GeneID" id="878080"/>
<dbReference type="KEGG" id="pae:PA1150"/>
<dbReference type="PATRIC" id="fig|208964.12.peg.1196"/>
<dbReference type="PseudoCAP" id="PA1150"/>
<dbReference type="HOGENOM" id="CLU_458468_0_0_6"/>
<dbReference type="InParanoid" id="Q06584"/>
<dbReference type="OrthoDB" id="2067488at2"/>
<dbReference type="PhylomeDB" id="Q06584"/>
<dbReference type="BioCyc" id="PAER208964:G1FZ6-1176-MONOMER"/>
<dbReference type="EvolutionaryTrace" id="Q06584"/>
<dbReference type="Proteomes" id="UP000002438">
    <property type="component" value="Chromosome"/>
</dbReference>
<dbReference type="GO" id="GO:0004519">
    <property type="term" value="F:endonuclease activity"/>
    <property type="evidence" value="ECO:0007669"/>
    <property type="project" value="UniProtKB-KW"/>
</dbReference>
<dbReference type="GO" id="GO:0046872">
    <property type="term" value="F:metal ion binding"/>
    <property type="evidence" value="ECO:0007669"/>
    <property type="project" value="UniProtKB-KW"/>
</dbReference>
<dbReference type="GO" id="GO:0005102">
    <property type="term" value="F:signaling receptor binding"/>
    <property type="evidence" value="ECO:0007669"/>
    <property type="project" value="InterPro"/>
</dbReference>
<dbReference type="GO" id="GO:0019835">
    <property type="term" value="P:cytolysis"/>
    <property type="evidence" value="ECO:0000314"/>
    <property type="project" value="PseudoCAP"/>
</dbReference>
<dbReference type="GO" id="GO:0042742">
    <property type="term" value="P:defense response to bacterium"/>
    <property type="evidence" value="ECO:0007669"/>
    <property type="project" value="UniProtKB-KW"/>
</dbReference>
<dbReference type="GO" id="GO:0031640">
    <property type="term" value="P:killing of cells of another organism"/>
    <property type="evidence" value="ECO:0007669"/>
    <property type="project" value="UniProtKB-KW"/>
</dbReference>
<dbReference type="CDD" id="cd00085">
    <property type="entry name" value="HNHc"/>
    <property type="match status" value="1"/>
</dbReference>
<dbReference type="Gene3D" id="3.90.540.10">
    <property type="entry name" value="Colicin/pyocin, DNase domain"/>
    <property type="match status" value="1"/>
</dbReference>
<dbReference type="InterPro" id="IPR037146">
    <property type="entry name" value="Colicin/pyocin_DNase_dom_sf"/>
</dbReference>
<dbReference type="InterPro" id="IPR044925">
    <property type="entry name" value="His-Me_finger_sf"/>
</dbReference>
<dbReference type="InterPro" id="IPR003615">
    <property type="entry name" value="HNH_nuc"/>
</dbReference>
<dbReference type="InterPro" id="IPR003060">
    <property type="entry name" value="Pyocin_killer"/>
</dbReference>
<dbReference type="InterPro" id="IPR016128">
    <property type="entry name" value="Pyosin/cloacin_T_dom"/>
</dbReference>
<dbReference type="InterPro" id="IPR036302">
    <property type="entry name" value="Pyosin/cloacin_T_dom_sf"/>
</dbReference>
<dbReference type="Pfam" id="PF21431">
    <property type="entry name" value="Col-Pyo_DNase"/>
    <property type="match status" value="1"/>
</dbReference>
<dbReference type="Pfam" id="PF06958">
    <property type="entry name" value="Pyocin_S"/>
    <property type="match status" value="1"/>
</dbReference>
<dbReference type="PRINTS" id="PR01300">
    <property type="entry name" value="PYOCINKILLER"/>
</dbReference>
<dbReference type="SMART" id="SM00507">
    <property type="entry name" value="HNHc"/>
    <property type="match status" value="1"/>
</dbReference>
<dbReference type="SUPFAM" id="SSF69369">
    <property type="entry name" value="Cloacin translocation domain"/>
    <property type="match status" value="1"/>
</dbReference>
<dbReference type="SUPFAM" id="SSF54060">
    <property type="entry name" value="His-Me finger endonucleases"/>
    <property type="match status" value="1"/>
</dbReference>
<keyword id="KW-0002">3D-structure</keyword>
<keyword id="KW-0044">Antibiotic</keyword>
<keyword id="KW-0929">Antimicrobial</keyword>
<keyword id="KW-0078">Bacteriocin</keyword>
<keyword id="KW-0903">Direct protein sequencing</keyword>
<keyword id="KW-0255">Endonuclease</keyword>
<keyword id="KW-0378">Hydrolase</keyword>
<keyword id="KW-0479">Metal-binding</keyword>
<keyword id="KW-0540">Nuclease</keyword>
<keyword id="KW-1185">Reference proteome</keyword>
<keyword id="KW-0862">Zinc</keyword>
<reference key="1">
    <citation type="journal article" date="1993" name="J. Bacteriol.">
        <title>Molecular structures and functions of pyocins S1 and S2 in Pseudomonas aeruginosa.</title>
        <authorList>
            <person name="Sano Y."/>
            <person name="Matsui H."/>
            <person name="Kobayashi M."/>
            <person name="Kageyama M."/>
        </authorList>
    </citation>
    <scope>NUCLEOTIDE SEQUENCE [GENOMIC DNA]</scope>
    <scope>PROTEIN SEQUENCE OF 2-18</scope>
    <source>
        <strain>PAO</strain>
    </source>
</reference>
<reference key="2">
    <citation type="journal article" date="2000" name="Nature">
        <title>Complete genome sequence of Pseudomonas aeruginosa PAO1, an opportunistic pathogen.</title>
        <authorList>
            <person name="Stover C.K."/>
            <person name="Pham X.-Q.T."/>
            <person name="Erwin A.L."/>
            <person name="Mizoguchi S.D."/>
            <person name="Warrener P."/>
            <person name="Hickey M.J."/>
            <person name="Brinkman F.S.L."/>
            <person name="Hufnagle W.O."/>
            <person name="Kowalik D.J."/>
            <person name="Lagrou M."/>
            <person name="Garber R.L."/>
            <person name="Goltry L."/>
            <person name="Tolentino E."/>
            <person name="Westbrock-Wadman S."/>
            <person name="Yuan Y."/>
            <person name="Brody L.L."/>
            <person name="Coulter S.N."/>
            <person name="Folger K.R."/>
            <person name="Kas A."/>
            <person name="Larbig K."/>
            <person name="Lim R.M."/>
            <person name="Smith K.A."/>
            <person name="Spencer D.H."/>
            <person name="Wong G.K.-S."/>
            <person name="Wu Z."/>
            <person name="Paulsen I.T."/>
            <person name="Reizer J."/>
            <person name="Saier M.H. Jr."/>
            <person name="Hancock R.E.W."/>
            <person name="Lory S."/>
            <person name="Olson M.V."/>
        </authorList>
    </citation>
    <scope>NUCLEOTIDE SEQUENCE [LARGE SCALE GENOMIC DNA]</scope>
    <source>
        <strain>ATCC 15692 / DSM 22644 / CIP 104116 / JCM 14847 / LMG 12228 / 1C / PRS 101 / PAO1</strain>
    </source>
</reference>
<comment type="function">
    <text>Causes breakdown of chromosomal DNA as well as complete inhibition of lipid synthesis in sensitive cells.</text>
</comment>
<comment type="subunit">
    <text>Purified pyocin S2 makes up a complex of the two (large and small) proteins. The large protein, but not the pyocin complex, shows in vitro DNase activity.</text>
</comment>
<comment type="miscellaneous">
    <text>Pyocins contain N-terminal receptor-binding domain, translocation domain and C-terminal DNase domain.</text>
</comment>
<comment type="similarity">
    <text evidence="3">Belongs to the colicin/pyosin nuclease family.</text>
</comment>
<organism>
    <name type="scientific">Pseudomonas aeruginosa (strain ATCC 15692 / DSM 22644 / CIP 104116 / JCM 14847 / LMG 12228 / 1C / PRS 101 / PAO1)</name>
    <dbReference type="NCBI Taxonomy" id="208964"/>
    <lineage>
        <taxon>Bacteria</taxon>
        <taxon>Pseudomonadati</taxon>
        <taxon>Pseudomonadota</taxon>
        <taxon>Gammaproteobacteria</taxon>
        <taxon>Pseudomonadales</taxon>
        <taxon>Pseudomonadaceae</taxon>
        <taxon>Pseudomonas</taxon>
    </lineage>
</organism>
<gene>
    <name type="primary">pys2</name>
    <name type="ordered locus">PA1150</name>
</gene>